<accession>Q0TKJ7</accession>
<dbReference type="EC" id="6.3.4.20" evidence="1"/>
<dbReference type="EMBL" id="CP000247">
    <property type="protein sequence ID" value="ABG68534.1"/>
    <property type="molecule type" value="Genomic_DNA"/>
</dbReference>
<dbReference type="RefSeq" id="WP_000817227.1">
    <property type="nucleotide sequence ID" value="NC_008253.1"/>
</dbReference>
<dbReference type="SMR" id="Q0TKJ7"/>
<dbReference type="GeneID" id="86862989"/>
<dbReference type="KEGG" id="ecp:ECP_0505"/>
<dbReference type="HOGENOM" id="CLU_081854_0_0_6"/>
<dbReference type="UniPathway" id="UPA00391"/>
<dbReference type="Proteomes" id="UP000009182">
    <property type="component" value="Chromosome"/>
</dbReference>
<dbReference type="GO" id="GO:0005524">
    <property type="term" value="F:ATP binding"/>
    <property type="evidence" value="ECO:0007669"/>
    <property type="project" value="UniProtKB-UniRule"/>
</dbReference>
<dbReference type="GO" id="GO:0016879">
    <property type="term" value="F:ligase activity, forming carbon-nitrogen bonds"/>
    <property type="evidence" value="ECO:0007669"/>
    <property type="project" value="UniProtKB-UniRule"/>
</dbReference>
<dbReference type="GO" id="GO:0008270">
    <property type="term" value="F:zinc ion binding"/>
    <property type="evidence" value="ECO:0007669"/>
    <property type="project" value="UniProtKB-UniRule"/>
</dbReference>
<dbReference type="GO" id="GO:0008616">
    <property type="term" value="P:queuosine biosynthetic process"/>
    <property type="evidence" value="ECO:0007669"/>
    <property type="project" value="UniProtKB-UniRule"/>
</dbReference>
<dbReference type="CDD" id="cd01995">
    <property type="entry name" value="QueC-like"/>
    <property type="match status" value="1"/>
</dbReference>
<dbReference type="FunFam" id="3.40.50.620:FF:000017">
    <property type="entry name" value="7-cyano-7-deazaguanine synthase"/>
    <property type="match status" value="1"/>
</dbReference>
<dbReference type="Gene3D" id="3.40.50.620">
    <property type="entry name" value="HUPs"/>
    <property type="match status" value="1"/>
</dbReference>
<dbReference type="HAMAP" id="MF_01633">
    <property type="entry name" value="QueC"/>
    <property type="match status" value="1"/>
</dbReference>
<dbReference type="InterPro" id="IPR018317">
    <property type="entry name" value="QueC"/>
</dbReference>
<dbReference type="InterPro" id="IPR014729">
    <property type="entry name" value="Rossmann-like_a/b/a_fold"/>
</dbReference>
<dbReference type="NCBIfam" id="TIGR00364">
    <property type="entry name" value="7-cyano-7-deazaguanine synthase QueC"/>
    <property type="match status" value="1"/>
</dbReference>
<dbReference type="NCBIfam" id="NF008317">
    <property type="entry name" value="PRK11106.1"/>
    <property type="match status" value="1"/>
</dbReference>
<dbReference type="PANTHER" id="PTHR42914">
    <property type="entry name" value="7-CYANO-7-DEAZAGUANINE SYNTHASE"/>
    <property type="match status" value="1"/>
</dbReference>
<dbReference type="PANTHER" id="PTHR42914:SF1">
    <property type="entry name" value="7-CYANO-7-DEAZAGUANINE SYNTHASE"/>
    <property type="match status" value="1"/>
</dbReference>
<dbReference type="Pfam" id="PF06508">
    <property type="entry name" value="QueC"/>
    <property type="match status" value="1"/>
</dbReference>
<dbReference type="PIRSF" id="PIRSF006293">
    <property type="entry name" value="ExsB"/>
    <property type="match status" value="1"/>
</dbReference>
<dbReference type="SUPFAM" id="SSF52402">
    <property type="entry name" value="Adenine nucleotide alpha hydrolases-like"/>
    <property type="match status" value="1"/>
</dbReference>
<protein>
    <recommendedName>
        <fullName evidence="1">7-cyano-7-deazaguanine synthase</fullName>
        <ecNumber evidence="1">6.3.4.20</ecNumber>
    </recommendedName>
    <alternativeName>
        <fullName evidence="1">7-cyano-7-carbaguanine synthase</fullName>
    </alternativeName>
    <alternativeName>
        <fullName evidence="1">PreQ(0) synthase</fullName>
    </alternativeName>
    <alternativeName>
        <fullName evidence="1">Queuosine biosynthesis protein QueC</fullName>
    </alternativeName>
</protein>
<gene>
    <name evidence="1" type="primary">queC</name>
    <name type="ordered locus">ECP_0505</name>
</gene>
<comment type="function">
    <text evidence="1">Catalyzes the ATP-dependent conversion of 7-carboxy-7-deazaguanine (CDG) to 7-cyano-7-deazaguanine (preQ(0)).</text>
</comment>
<comment type="catalytic activity">
    <reaction evidence="1">
        <text>7-carboxy-7-deazaguanine + NH4(+) + ATP = 7-cyano-7-deazaguanine + ADP + phosphate + H2O + H(+)</text>
        <dbReference type="Rhea" id="RHEA:27982"/>
        <dbReference type="ChEBI" id="CHEBI:15377"/>
        <dbReference type="ChEBI" id="CHEBI:15378"/>
        <dbReference type="ChEBI" id="CHEBI:28938"/>
        <dbReference type="ChEBI" id="CHEBI:30616"/>
        <dbReference type="ChEBI" id="CHEBI:43474"/>
        <dbReference type="ChEBI" id="CHEBI:45075"/>
        <dbReference type="ChEBI" id="CHEBI:61036"/>
        <dbReference type="ChEBI" id="CHEBI:456216"/>
        <dbReference type="EC" id="6.3.4.20"/>
    </reaction>
</comment>
<comment type="cofactor">
    <cofactor evidence="1">
        <name>Zn(2+)</name>
        <dbReference type="ChEBI" id="CHEBI:29105"/>
    </cofactor>
    <text evidence="1">Binds 1 zinc ion per subunit.</text>
</comment>
<comment type="pathway">
    <text evidence="1">Purine metabolism; 7-cyano-7-deazaguanine biosynthesis.</text>
</comment>
<comment type="similarity">
    <text evidence="1">Belongs to the QueC family.</text>
</comment>
<keyword id="KW-0067">ATP-binding</keyword>
<keyword id="KW-0436">Ligase</keyword>
<keyword id="KW-0479">Metal-binding</keyword>
<keyword id="KW-0547">Nucleotide-binding</keyword>
<keyword id="KW-0671">Queuosine biosynthesis</keyword>
<keyword id="KW-0862">Zinc</keyword>
<sequence length="231" mass="25452">MKRAVVVFSGGQDSTTCLVQALQQYDEVHCVTFDYGQRHRAEIDVARELALKLGARAHKVLDVTLLNELAVSSLTRDSIPVPDYEPEADGIPNTFVPGRNILFLTLAAIYAYQVKAEAVITGVCETDFSGYPDCRDEFVKALNHAVSLGMAKDIRFETPLMWIDKAETWALADYYGKLDLVRNETLTCYNGIKGDGCGHCAACNLRANGLNHYLADKPTVMAAMKQKTGLK</sequence>
<reference key="1">
    <citation type="journal article" date="2006" name="Mol. Microbiol.">
        <title>Role of pathogenicity island-associated integrases in the genome plasticity of uropathogenic Escherichia coli strain 536.</title>
        <authorList>
            <person name="Hochhut B."/>
            <person name="Wilde C."/>
            <person name="Balling G."/>
            <person name="Middendorf B."/>
            <person name="Dobrindt U."/>
            <person name="Brzuszkiewicz E."/>
            <person name="Gottschalk G."/>
            <person name="Carniel E."/>
            <person name="Hacker J."/>
        </authorList>
    </citation>
    <scope>NUCLEOTIDE SEQUENCE [LARGE SCALE GENOMIC DNA]</scope>
    <source>
        <strain>536 / UPEC</strain>
    </source>
</reference>
<proteinExistence type="inferred from homology"/>
<organism>
    <name type="scientific">Escherichia coli O6:K15:H31 (strain 536 / UPEC)</name>
    <dbReference type="NCBI Taxonomy" id="362663"/>
    <lineage>
        <taxon>Bacteria</taxon>
        <taxon>Pseudomonadati</taxon>
        <taxon>Pseudomonadota</taxon>
        <taxon>Gammaproteobacteria</taxon>
        <taxon>Enterobacterales</taxon>
        <taxon>Enterobacteriaceae</taxon>
        <taxon>Escherichia</taxon>
    </lineage>
</organism>
<name>QUEC_ECOL5</name>
<evidence type="ECO:0000255" key="1">
    <source>
        <dbReference type="HAMAP-Rule" id="MF_01633"/>
    </source>
</evidence>
<feature type="chain" id="PRO_0000255919" description="7-cyano-7-deazaguanine synthase">
    <location>
        <begin position="1"/>
        <end position="231"/>
    </location>
</feature>
<feature type="binding site" evidence="1">
    <location>
        <begin position="8"/>
        <end position="18"/>
    </location>
    <ligand>
        <name>ATP</name>
        <dbReference type="ChEBI" id="CHEBI:30616"/>
    </ligand>
</feature>
<feature type="binding site" evidence="1">
    <location>
        <position position="188"/>
    </location>
    <ligand>
        <name>Zn(2+)</name>
        <dbReference type="ChEBI" id="CHEBI:29105"/>
    </ligand>
</feature>
<feature type="binding site" evidence="1">
    <location>
        <position position="197"/>
    </location>
    <ligand>
        <name>Zn(2+)</name>
        <dbReference type="ChEBI" id="CHEBI:29105"/>
    </ligand>
</feature>
<feature type="binding site" evidence="1">
    <location>
        <position position="200"/>
    </location>
    <ligand>
        <name>Zn(2+)</name>
        <dbReference type="ChEBI" id="CHEBI:29105"/>
    </ligand>
</feature>
<feature type="binding site" evidence="1">
    <location>
        <position position="203"/>
    </location>
    <ligand>
        <name>Zn(2+)</name>
        <dbReference type="ChEBI" id="CHEBI:29105"/>
    </ligand>
</feature>